<keyword id="KW-0963">Cytoplasm</keyword>
<keyword id="KW-0349">Heme</keyword>
<keyword id="KW-0408">Iron</keyword>
<keyword id="KW-0479">Metal-binding</keyword>
<keyword id="KW-0514">Muscle protein</keyword>
<keyword id="KW-0560">Oxidoreductase</keyword>
<keyword id="KW-0561">Oxygen transport</keyword>
<keyword id="KW-0597">Phosphoprotein</keyword>
<keyword id="KW-0813">Transport</keyword>
<proteinExistence type="evidence at transcript level"/>
<reference key="1">
    <citation type="journal article" date="2006" name="Comp. Biochem. Physiol.">
        <title>cDNA-derived amino acid sequences of myoglobins from nine species of whales and dolphins.</title>
        <authorList>
            <person name="Iwanami K."/>
            <person name="Mita H."/>
            <person name="Yamamoto Y."/>
            <person name="Fujise Y."/>
            <person name="Yamada T."/>
            <person name="Suzuki T."/>
        </authorList>
    </citation>
    <scope>NUCLEOTIDE SEQUENCE [MRNA]</scope>
</reference>
<sequence length="154" mass="17201">MGLSDGEWQLVLNVWGKVEADLAGHGQDILIRLFKGHPETLEKFDKFKHLKTEADMKASEDLKKHGITVLTALGAILKKKGHHDAELKPLAQSHATKHKIPIKYLEFISEAIIHVLHSRHPAEFGADAQGAMNKALELFRKDIAAKYKELGFHG</sequence>
<name>MYG_PENEL</name>
<gene>
    <name type="primary">MB</name>
</gene>
<accession>Q0KIY3</accession>
<protein>
    <recommendedName>
        <fullName>Myoglobin</fullName>
    </recommendedName>
    <alternativeName>
        <fullName evidence="1">Nitrite reductase MB</fullName>
        <ecNumber evidence="1">1.7.-.-</ecNumber>
    </alternativeName>
    <alternativeName>
        <fullName evidence="1">Pseudoperoxidase MB</fullName>
        <ecNumber evidence="1">1.11.1.-</ecNumber>
    </alternativeName>
</protein>
<feature type="chain" id="PRO_0000261582" description="Myoglobin">
    <location>
        <begin position="1"/>
        <end position="154"/>
    </location>
</feature>
<feature type="domain" description="Globin" evidence="7">
    <location>
        <begin position="2"/>
        <end position="148"/>
    </location>
</feature>
<feature type="binding site" evidence="5">
    <location>
        <position position="65"/>
    </location>
    <ligand>
        <name>nitrite</name>
        <dbReference type="ChEBI" id="CHEBI:16301"/>
    </ligand>
</feature>
<feature type="binding site" evidence="3 7">
    <location>
        <position position="65"/>
    </location>
    <ligand>
        <name>O2</name>
        <dbReference type="ChEBI" id="CHEBI:15379"/>
    </ligand>
</feature>
<feature type="binding site" description="proximal binding residue" evidence="1">
    <location>
        <position position="94"/>
    </location>
    <ligand>
        <name>heme b</name>
        <dbReference type="ChEBI" id="CHEBI:60344"/>
    </ligand>
    <ligandPart>
        <name>Fe</name>
        <dbReference type="ChEBI" id="CHEBI:18248"/>
    </ligandPart>
</feature>
<feature type="modified residue" description="Phosphoserine" evidence="6">
    <location>
        <position position="4"/>
    </location>
</feature>
<feature type="modified residue" description="Phosphothreonine" evidence="4">
    <location>
        <position position="68"/>
    </location>
</feature>
<evidence type="ECO:0000250" key="1">
    <source>
        <dbReference type="UniProtKB" id="P02144"/>
    </source>
</evidence>
<evidence type="ECO:0000250" key="2">
    <source>
        <dbReference type="UniProtKB" id="P02185"/>
    </source>
</evidence>
<evidence type="ECO:0000250" key="3">
    <source>
        <dbReference type="UniProtKB" id="P02189"/>
    </source>
</evidence>
<evidence type="ECO:0000250" key="4">
    <source>
        <dbReference type="UniProtKB" id="P04247"/>
    </source>
</evidence>
<evidence type="ECO:0000250" key="5">
    <source>
        <dbReference type="UniProtKB" id="P68082"/>
    </source>
</evidence>
<evidence type="ECO:0000250" key="6">
    <source>
        <dbReference type="UniProtKB" id="Q9QZ76"/>
    </source>
</evidence>
<evidence type="ECO:0000255" key="7">
    <source>
        <dbReference type="PROSITE-ProRule" id="PRU00238"/>
    </source>
</evidence>
<organism>
    <name type="scientific">Peponocephala electra</name>
    <name type="common">Melon-headed whale</name>
    <name type="synonym">Lagenorhynchus electra</name>
    <dbReference type="NCBI Taxonomy" id="103596"/>
    <lineage>
        <taxon>Eukaryota</taxon>
        <taxon>Metazoa</taxon>
        <taxon>Chordata</taxon>
        <taxon>Craniata</taxon>
        <taxon>Vertebrata</taxon>
        <taxon>Euteleostomi</taxon>
        <taxon>Mammalia</taxon>
        <taxon>Eutheria</taxon>
        <taxon>Laurasiatheria</taxon>
        <taxon>Artiodactyla</taxon>
        <taxon>Whippomorpha</taxon>
        <taxon>Cetacea</taxon>
        <taxon>Odontoceti</taxon>
        <taxon>Delphinidae</taxon>
        <taxon>Peponocephala</taxon>
    </lineage>
</organism>
<dbReference type="EC" id="1.7.-.-" evidence="1"/>
<dbReference type="EC" id="1.11.1.-" evidence="1"/>
<dbReference type="EMBL" id="AB271149">
    <property type="protein sequence ID" value="BAF03584.1"/>
    <property type="molecule type" value="mRNA"/>
</dbReference>
<dbReference type="SMR" id="Q0KIY3"/>
<dbReference type="GO" id="GO:0070062">
    <property type="term" value="C:extracellular exosome"/>
    <property type="evidence" value="ECO:0007669"/>
    <property type="project" value="TreeGrafter"/>
</dbReference>
<dbReference type="GO" id="GO:0016528">
    <property type="term" value="C:sarcoplasm"/>
    <property type="evidence" value="ECO:0000250"/>
    <property type="project" value="UniProtKB"/>
</dbReference>
<dbReference type="GO" id="GO:0020037">
    <property type="term" value="F:heme binding"/>
    <property type="evidence" value="ECO:0007669"/>
    <property type="project" value="InterPro"/>
</dbReference>
<dbReference type="GO" id="GO:0046872">
    <property type="term" value="F:metal ion binding"/>
    <property type="evidence" value="ECO:0007669"/>
    <property type="project" value="UniProtKB-KW"/>
</dbReference>
<dbReference type="GO" id="GO:0098809">
    <property type="term" value="F:nitrite reductase activity"/>
    <property type="evidence" value="ECO:0000250"/>
    <property type="project" value="UniProtKB"/>
</dbReference>
<dbReference type="GO" id="GO:0019825">
    <property type="term" value="F:oxygen binding"/>
    <property type="evidence" value="ECO:0007669"/>
    <property type="project" value="InterPro"/>
</dbReference>
<dbReference type="GO" id="GO:0005344">
    <property type="term" value="F:oxygen carrier activity"/>
    <property type="evidence" value="ECO:0000250"/>
    <property type="project" value="UniProtKB"/>
</dbReference>
<dbReference type="GO" id="GO:0004601">
    <property type="term" value="F:peroxidase activity"/>
    <property type="evidence" value="ECO:0000250"/>
    <property type="project" value="UniProtKB"/>
</dbReference>
<dbReference type="GO" id="GO:0019430">
    <property type="term" value="P:removal of superoxide radicals"/>
    <property type="evidence" value="ECO:0000250"/>
    <property type="project" value="UniProtKB"/>
</dbReference>
<dbReference type="Gene3D" id="6.10.140.2100">
    <property type="match status" value="1"/>
</dbReference>
<dbReference type="Gene3D" id="6.10.140.2110">
    <property type="match status" value="1"/>
</dbReference>
<dbReference type="InterPro" id="IPR000971">
    <property type="entry name" value="Globin"/>
</dbReference>
<dbReference type="InterPro" id="IPR009050">
    <property type="entry name" value="Globin-like_sf"/>
</dbReference>
<dbReference type="InterPro" id="IPR002335">
    <property type="entry name" value="Myoglobin"/>
</dbReference>
<dbReference type="PANTHER" id="PTHR47132">
    <property type="entry name" value="MYOGLOBIN"/>
    <property type="match status" value="1"/>
</dbReference>
<dbReference type="PANTHER" id="PTHR47132:SF1">
    <property type="entry name" value="MYOGLOBIN"/>
    <property type="match status" value="1"/>
</dbReference>
<dbReference type="Pfam" id="PF00042">
    <property type="entry name" value="Globin"/>
    <property type="match status" value="1"/>
</dbReference>
<dbReference type="PRINTS" id="PR00613">
    <property type="entry name" value="MYOGLOBIN"/>
</dbReference>
<dbReference type="SUPFAM" id="SSF46458">
    <property type="entry name" value="Globin-like"/>
    <property type="match status" value="1"/>
</dbReference>
<dbReference type="PROSITE" id="PS01033">
    <property type="entry name" value="GLOBIN"/>
    <property type="match status" value="1"/>
</dbReference>
<comment type="function">
    <text evidence="1">Monomeric heme protein which primary function is to store oxygen and facilitate its diffusion within muscle tissues. Reversibly binds oxygen through a pentacoordinated heme iron and enables its timely and efficient release as needed during periods of heightened demand. Depending on the oxidative conditions of tissues and cells, and in addition to its ability to bind oxygen, it also has a nitrite reductase activity whereby it regulates the production of bioactive nitric oxide. Under stress conditions, like hypoxia and anoxia, it also protects cells against reactive oxygen species thanks to its pseudoperoxidase activity.</text>
</comment>
<comment type="catalytic activity">
    <reaction evidence="1">
        <text>Fe(III)-heme b-[protein] + nitric oxide + H2O = Fe(II)-heme b-[protein] + nitrite + 2 H(+)</text>
        <dbReference type="Rhea" id="RHEA:77711"/>
        <dbReference type="Rhea" id="RHEA-COMP:18975"/>
        <dbReference type="Rhea" id="RHEA-COMP:18976"/>
        <dbReference type="ChEBI" id="CHEBI:15377"/>
        <dbReference type="ChEBI" id="CHEBI:15378"/>
        <dbReference type="ChEBI" id="CHEBI:16301"/>
        <dbReference type="ChEBI" id="CHEBI:16480"/>
        <dbReference type="ChEBI" id="CHEBI:55376"/>
        <dbReference type="ChEBI" id="CHEBI:60344"/>
    </reaction>
    <physiologicalReaction direction="right-to-left" evidence="1">
        <dbReference type="Rhea" id="RHEA:77713"/>
    </physiologicalReaction>
</comment>
<comment type="catalytic activity">
    <reaction evidence="1">
        <text>H2O2 + AH2 = A + 2 H2O</text>
        <dbReference type="Rhea" id="RHEA:30275"/>
        <dbReference type="ChEBI" id="CHEBI:13193"/>
        <dbReference type="ChEBI" id="CHEBI:15377"/>
        <dbReference type="ChEBI" id="CHEBI:16240"/>
        <dbReference type="ChEBI" id="CHEBI:17499"/>
    </reaction>
</comment>
<comment type="subunit">
    <text evidence="2">Monomeric.</text>
</comment>
<comment type="subcellular location">
    <subcellularLocation>
        <location evidence="1">Cytoplasm</location>
        <location evidence="1">Sarcoplasm</location>
    </subcellularLocation>
</comment>
<comment type="similarity">
    <text evidence="7">Belongs to the globin family.</text>
</comment>